<accession>Q7VFV4</accession>
<comment type="function">
    <text evidence="1">Catalyzes the reversible oxidation of malate to oxaloacetate.</text>
</comment>
<comment type="catalytic activity">
    <reaction evidence="1">
        <text>(S)-malate + NAD(+) = oxaloacetate + NADH + H(+)</text>
        <dbReference type="Rhea" id="RHEA:21432"/>
        <dbReference type="ChEBI" id="CHEBI:15378"/>
        <dbReference type="ChEBI" id="CHEBI:15589"/>
        <dbReference type="ChEBI" id="CHEBI:16452"/>
        <dbReference type="ChEBI" id="CHEBI:57540"/>
        <dbReference type="ChEBI" id="CHEBI:57945"/>
        <dbReference type="EC" id="1.1.1.37"/>
    </reaction>
</comment>
<comment type="similarity">
    <text evidence="2">Belongs to the LDH/MDH superfamily.</text>
</comment>
<gene>
    <name evidence="1" type="primary">mdh</name>
    <name type="ordered locus">HH_1571</name>
</gene>
<dbReference type="EC" id="1.1.1.37" evidence="1"/>
<dbReference type="EMBL" id="AE017125">
    <property type="protein sequence ID" value="AAP78168.1"/>
    <property type="molecule type" value="Genomic_DNA"/>
</dbReference>
<dbReference type="RefSeq" id="WP_011116411.1">
    <property type="nucleotide sequence ID" value="NC_004917.1"/>
</dbReference>
<dbReference type="SMR" id="Q7VFV4"/>
<dbReference type="STRING" id="235279.HH_1571"/>
<dbReference type="KEGG" id="hhe:HH_1571"/>
<dbReference type="eggNOG" id="COG0039">
    <property type="taxonomic scope" value="Bacteria"/>
</dbReference>
<dbReference type="HOGENOM" id="CLU_045401_2_1_7"/>
<dbReference type="OrthoDB" id="9802969at2"/>
<dbReference type="Proteomes" id="UP000002495">
    <property type="component" value="Chromosome"/>
</dbReference>
<dbReference type="GO" id="GO:0004459">
    <property type="term" value="F:L-lactate dehydrogenase activity"/>
    <property type="evidence" value="ECO:0007669"/>
    <property type="project" value="TreeGrafter"/>
</dbReference>
<dbReference type="GO" id="GO:0030060">
    <property type="term" value="F:L-malate dehydrogenase (NAD+) activity"/>
    <property type="evidence" value="ECO:0007669"/>
    <property type="project" value="UniProtKB-EC"/>
</dbReference>
<dbReference type="GO" id="GO:0006089">
    <property type="term" value="P:lactate metabolic process"/>
    <property type="evidence" value="ECO:0007669"/>
    <property type="project" value="TreeGrafter"/>
</dbReference>
<dbReference type="GO" id="GO:0006099">
    <property type="term" value="P:tricarboxylic acid cycle"/>
    <property type="evidence" value="ECO:0007669"/>
    <property type="project" value="UniProtKB-KW"/>
</dbReference>
<dbReference type="CDD" id="cd01339">
    <property type="entry name" value="LDH-like_MDH"/>
    <property type="match status" value="1"/>
</dbReference>
<dbReference type="Gene3D" id="3.90.110.10">
    <property type="entry name" value="Lactate dehydrogenase/glycoside hydrolase, family 4, C-terminal"/>
    <property type="match status" value="1"/>
</dbReference>
<dbReference type="Gene3D" id="3.40.50.720">
    <property type="entry name" value="NAD(P)-binding Rossmann-like Domain"/>
    <property type="match status" value="1"/>
</dbReference>
<dbReference type="InterPro" id="IPR001557">
    <property type="entry name" value="L-lactate/malate_DH"/>
</dbReference>
<dbReference type="InterPro" id="IPR022383">
    <property type="entry name" value="Lactate/malate_DH_C"/>
</dbReference>
<dbReference type="InterPro" id="IPR001236">
    <property type="entry name" value="Lactate/malate_DH_N"/>
</dbReference>
<dbReference type="InterPro" id="IPR015955">
    <property type="entry name" value="Lactate_DH/Glyco_Ohase_4_C"/>
</dbReference>
<dbReference type="InterPro" id="IPR011275">
    <property type="entry name" value="Malate_DH_type3"/>
</dbReference>
<dbReference type="InterPro" id="IPR036291">
    <property type="entry name" value="NAD(P)-bd_dom_sf"/>
</dbReference>
<dbReference type="NCBIfam" id="NF004863">
    <property type="entry name" value="PRK06223.1"/>
    <property type="match status" value="1"/>
</dbReference>
<dbReference type="PANTHER" id="PTHR43128">
    <property type="entry name" value="L-2-HYDROXYCARBOXYLATE DEHYDROGENASE (NAD(P)(+))"/>
    <property type="match status" value="1"/>
</dbReference>
<dbReference type="PANTHER" id="PTHR43128:SF16">
    <property type="entry name" value="L-LACTATE DEHYDROGENASE"/>
    <property type="match status" value="1"/>
</dbReference>
<dbReference type="Pfam" id="PF02866">
    <property type="entry name" value="Ldh_1_C"/>
    <property type="match status" value="1"/>
</dbReference>
<dbReference type="Pfam" id="PF00056">
    <property type="entry name" value="Ldh_1_N"/>
    <property type="match status" value="1"/>
</dbReference>
<dbReference type="PIRSF" id="PIRSF000102">
    <property type="entry name" value="Lac_mal_DH"/>
    <property type="match status" value="1"/>
</dbReference>
<dbReference type="PRINTS" id="PR00086">
    <property type="entry name" value="LLDHDRGNASE"/>
</dbReference>
<dbReference type="SUPFAM" id="SSF56327">
    <property type="entry name" value="LDH C-terminal domain-like"/>
    <property type="match status" value="1"/>
</dbReference>
<dbReference type="SUPFAM" id="SSF51735">
    <property type="entry name" value="NAD(P)-binding Rossmann-fold domains"/>
    <property type="match status" value="1"/>
</dbReference>
<proteinExistence type="inferred from homology"/>
<reference key="1">
    <citation type="journal article" date="2003" name="Proc. Natl. Acad. Sci. U.S.A.">
        <title>The complete genome sequence of the carcinogenic bacterium Helicobacter hepaticus.</title>
        <authorList>
            <person name="Suerbaum S."/>
            <person name="Josenhans C."/>
            <person name="Sterzenbach T."/>
            <person name="Drescher B."/>
            <person name="Brandt P."/>
            <person name="Bell M."/>
            <person name="Droege M."/>
            <person name="Fartmann B."/>
            <person name="Fischer H.-P."/>
            <person name="Ge Z."/>
            <person name="Hoerster A."/>
            <person name="Holland R."/>
            <person name="Klein K."/>
            <person name="Koenig J."/>
            <person name="Macko L."/>
            <person name="Mendz G.L."/>
            <person name="Nyakatura G."/>
            <person name="Schauer D.B."/>
            <person name="Shen Z."/>
            <person name="Weber J."/>
            <person name="Frosch M."/>
            <person name="Fox J.G."/>
        </authorList>
    </citation>
    <scope>NUCLEOTIDE SEQUENCE [LARGE SCALE GENOMIC DNA]</scope>
    <source>
        <strain>ATCC 51449 / 3B1</strain>
    </source>
</reference>
<keyword id="KW-0520">NAD</keyword>
<keyword id="KW-0560">Oxidoreductase</keyword>
<keyword id="KW-1185">Reference proteome</keyword>
<keyword id="KW-0816">Tricarboxylic acid cycle</keyword>
<protein>
    <recommendedName>
        <fullName evidence="1">Malate dehydrogenase</fullName>
        <ecNumber evidence="1">1.1.1.37</ecNumber>
    </recommendedName>
</protein>
<sequence length="315" mass="34703">MFEKIAIIGGSGNVGSHIAFLGAMRHIAKEILLFSNDIPRCKGVGLDISQAAAIFDIPILIKGCNSYEEIAESEVVIITAGFPRTPNMTRNDLLLKNASIIQEISSNVARIAPQSLLIVVSNPLDAMCLVAKQWSKFEKERVIGMAGILDSARLTYESKVMLGDFNKHIQSYVIGSHSDDMLPLLRHCLCEGKVFTDIFTPKMQEELIKETKGGGAKIVNYYQKGSAYFAPASGVIKILEAISTLNEEILVCSVFTEGEYGIKDIYLGLPIKLGKKGVEHIVELPLNQQEQEMLNISTQGIKEQVEILKDNKLLY</sequence>
<name>MDH_HELHP</name>
<feature type="chain" id="PRO_0000113456" description="Malate dehydrogenase">
    <location>
        <begin position="1"/>
        <end position="315"/>
    </location>
</feature>
<feature type="active site" description="Proton acceptor" evidence="1">
    <location>
        <position position="177"/>
    </location>
</feature>
<feature type="binding site" evidence="1">
    <location>
        <begin position="9"/>
        <end position="15"/>
    </location>
    <ligand>
        <name>NAD(+)</name>
        <dbReference type="ChEBI" id="CHEBI:57540"/>
    </ligand>
</feature>
<feature type="binding site" evidence="1">
    <location>
        <position position="84"/>
    </location>
    <ligand>
        <name>substrate</name>
    </ligand>
</feature>
<feature type="binding site" evidence="1">
    <location>
        <position position="90"/>
    </location>
    <ligand>
        <name>substrate</name>
    </ligand>
</feature>
<feature type="binding site" evidence="1">
    <location>
        <position position="97"/>
    </location>
    <ligand>
        <name>NAD(+)</name>
        <dbReference type="ChEBI" id="CHEBI:57540"/>
    </ligand>
</feature>
<feature type="binding site" evidence="1">
    <location>
        <begin position="120"/>
        <end position="122"/>
    </location>
    <ligand>
        <name>NAD(+)</name>
        <dbReference type="ChEBI" id="CHEBI:57540"/>
    </ligand>
</feature>
<feature type="binding site" evidence="1">
    <location>
        <position position="122"/>
    </location>
    <ligand>
        <name>substrate</name>
    </ligand>
</feature>
<feature type="binding site" evidence="1">
    <location>
        <position position="153"/>
    </location>
    <ligand>
        <name>substrate</name>
    </ligand>
</feature>
<organism>
    <name type="scientific">Helicobacter hepaticus (strain ATCC 51449 / 3B1)</name>
    <dbReference type="NCBI Taxonomy" id="235279"/>
    <lineage>
        <taxon>Bacteria</taxon>
        <taxon>Pseudomonadati</taxon>
        <taxon>Campylobacterota</taxon>
        <taxon>Epsilonproteobacteria</taxon>
        <taxon>Campylobacterales</taxon>
        <taxon>Helicobacteraceae</taxon>
        <taxon>Helicobacter</taxon>
    </lineage>
</organism>
<evidence type="ECO:0000250" key="1">
    <source>
        <dbReference type="UniProtKB" id="P61889"/>
    </source>
</evidence>
<evidence type="ECO:0000305" key="2"/>